<evidence type="ECO:0000255" key="1">
    <source>
        <dbReference type="HAMAP-Rule" id="MF_00283"/>
    </source>
</evidence>
<feature type="chain" id="PRO_0000232077" description="Phenylalanine--tRNA ligase beta subunit">
    <location>
        <begin position="1"/>
        <end position="792"/>
    </location>
</feature>
<feature type="domain" description="tRNA-binding" evidence="1">
    <location>
        <begin position="39"/>
        <end position="147"/>
    </location>
</feature>
<feature type="domain" description="B5" evidence="1">
    <location>
        <begin position="400"/>
        <end position="476"/>
    </location>
</feature>
<feature type="domain" description="FDX-ACB" evidence="1">
    <location>
        <begin position="698"/>
        <end position="791"/>
    </location>
</feature>
<feature type="binding site" evidence="1">
    <location>
        <position position="454"/>
    </location>
    <ligand>
        <name>Mg(2+)</name>
        <dbReference type="ChEBI" id="CHEBI:18420"/>
        <note>shared with alpha subunit</note>
    </ligand>
</feature>
<feature type="binding site" evidence="1">
    <location>
        <position position="460"/>
    </location>
    <ligand>
        <name>Mg(2+)</name>
        <dbReference type="ChEBI" id="CHEBI:18420"/>
        <note>shared with alpha subunit</note>
    </ligand>
</feature>
<feature type="binding site" evidence="1">
    <location>
        <position position="463"/>
    </location>
    <ligand>
        <name>Mg(2+)</name>
        <dbReference type="ChEBI" id="CHEBI:18420"/>
        <note>shared with alpha subunit</note>
    </ligand>
</feature>
<feature type="binding site" evidence="1">
    <location>
        <position position="464"/>
    </location>
    <ligand>
        <name>Mg(2+)</name>
        <dbReference type="ChEBI" id="CHEBI:18420"/>
        <note>shared with alpha subunit</note>
    </ligand>
</feature>
<dbReference type="EC" id="6.1.1.20" evidence="1"/>
<dbReference type="EMBL" id="CP000094">
    <property type="protein sequence ID" value="ABA73679.1"/>
    <property type="molecule type" value="Genomic_DNA"/>
</dbReference>
<dbReference type="RefSeq" id="WP_011333388.1">
    <property type="nucleotide sequence ID" value="NC_007492.2"/>
</dbReference>
<dbReference type="SMR" id="Q3KEX7"/>
<dbReference type="KEGG" id="pfo:Pfl01_1936"/>
<dbReference type="eggNOG" id="COG0072">
    <property type="taxonomic scope" value="Bacteria"/>
</dbReference>
<dbReference type="HOGENOM" id="CLU_016891_0_0_6"/>
<dbReference type="Proteomes" id="UP000002704">
    <property type="component" value="Chromosome"/>
</dbReference>
<dbReference type="GO" id="GO:0009328">
    <property type="term" value="C:phenylalanine-tRNA ligase complex"/>
    <property type="evidence" value="ECO:0007669"/>
    <property type="project" value="TreeGrafter"/>
</dbReference>
<dbReference type="GO" id="GO:0005524">
    <property type="term" value="F:ATP binding"/>
    <property type="evidence" value="ECO:0007669"/>
    <property type="project" value="UniProtKB-UniRule"/>
</dbReference>
<dbReference type="GO" id="GO:0000287">
    <property type="term" value="F:magnesium ion binding"/>
    <property type="evidence" value="ECO:0007669"/>
    <property type="project" value="UniProtKB-UniRule"/>
</dbReference>
<dbReference type="GO" id="GO:0004826">
    <property type="term" value="F:phenylalanine-tRNA ligase activity"/>
    <property type="evidence" value="ECO:0007669"/>
    <property type="project" value="UniProtKB-UniRule"/>
</dbReference>
<dbReference type="GO" id="GO:0000049">
    <property type="term" value="F:tRNA binding"/>
    <property type="evidence" value="ECO:0007669"/>
    <property type="project" value="UniProtKB-KW"/>
</dbReference>
<dbReference type="GO" id="GO:0006432">
    <property type="term" value="P:phenylalanyl-tRNA aminoacylation"/>
    <property type="evidence" value="ECO:0007669"/>
    <property type="project" value="UniProtKB-UniRule"/>
</dbReference>
<dbReference type="CDD" id="cd00769">
    <property type="entry name" value="PheRS_beta_core"/>
    <property type="match status" value="1"/>
</dbReference>
<dbReference type="CDD" id="cd02796">
    <property type="entry name" value="tRNA_bind_bactPheRS"/>
    <property type="match status" value="1"/>
</dbReference>
<dbReference type="FunFam" id="2.40.50.140:FF:000045">
    <property type="entry name" value="Phenylalanine--tRNA ligase beta subunit"/>
    <property type="match status" value="1"/>
</dbReference>
<dbReference type="FunFam" id="3.30.56.10:FF:000002">
    <property type="entry name" value="Phenylalanine--tRNA ligase beta subunit"/>
    <property type="match status" value="1"/>
</dbReference>
<dbReference type="FunFam" id="3.30.70.380:FF:000001">
    <property type="entry name" value="Phenylalanine--tRNA ligase beta subunit"/>
    <property type="match status" value="1"/>
</dbReference>
<dbReference type="FunFam" id="3.30.930.10:FF:000022">
    <property type="entry name" value="Phenylalanine--tRNA ligase beta subunit"/>
    <property type="match status" value="1"/>
</dbReference>
<dbReference type="FunFam" id="3.50.40.10:FF:000001">
    <property type="entry name" value="Phenylalanine--tRNA ligase beta subunit"/>
    <property type="match status" value="1"/>
</dbReference>
<dbReference type="Gene3D" id="3.30.56.10">
    <property type="match status" value="2"/>
</dbReference>
<dbReference type="Gene3D" id="3.30.930.10">
    <property type="entry name" value="Bira Bifunctional Protein, Domain 2"/>
    <property type="match status" value="1"/>
</dbReference>
<dbReference type="Gene3D" id="3.30.70.380">
    <property type="entry name" value="Ferrodoxin-fold anticodon-binding domain"/>
    <property type="match status" value="1"/>
</dbReference>
<dbReference type="Gene3D" id="2.40.50.140">
    <property type="entry name" value="Nucleic acid-binding proteins"/>
    <property type="match status" value="1"/>
</dbReference>
<dbReference type="Gene3D" id="3.50.40.10">
    <property type="entry name" value="Phenylalanyl-trna Synthetase, Chain B, domain 3"/>
    <property type="match status" value="1"/>
</dbReference>
<dbReference type="HAMAP" id="MF_00283">
    <property type="entry name" value="Phe_tRNA_synth_beta1"/>
    <property type="match status" value="1"/>
</dbReference>
<dbReference type="InterPro" id="IPR045864">
    <property type="entry name" value="aa-tRNA-synth_II/BPL/LPL"/>
</dbReference>
<dbReference type="InterPro" id="IPR005146">
    <property type="entry name" value="B3/B4_tRNA-bd"/>
</dbReference>
<dbReference type="InterPro" id="IPR009061">
    <property type="entry name" value="DNA-bd_dom_put_sf"/>
</dbReference>
<dbReference type="InterPro" id="IPR005121">
    <property type="entry name" value="Fdx_antiC-bd"/>
</dbReference>
<dbReference type="InterPro" id="IPR036690">
    <property type="entry name" value="Fdx_antiC-bd_sf"/>
</dbReference>
<dbReference type="InterPro" id="IPR012340">
    <property type="entry name" value="NA-bd_OB-fold"/>
</dbReference>
<dbReference type="InterPro" id="IPR045060">
    <property type="entry name" value="Phe-tRNA-ligase_IIc_bsu"/>
</dbReference>
<dbReference type="InterPro" id="IPR004532">
    <property type="entry name" value="Phe-tRNA-ligase_IIc_bsu_bact"/>
</dbReference>
<dbReference type="InterPro" id="IPR020825">
    <property type="entry name" value="Phe-tRNA_synthase-like_B3/B4"/>
</dbReference>
<dbReference type="InterPro" id="IPR041616">
    <property type="entry name" value="PheRS_beta_core"/>
</dbReference>
<dbReference type="InterPro" id="IPR002547">
    <property type="entry name" value="tRNA-bd_dom"/>
</dbReference>
<dbReference type="InterPro" id="IPR033714">
    <property type="entry name" value="tRNA_bind_bactPheRS"/>
</dbReference>
<dbReference type="InterPro" id="IPR005147">
    <property type="entry name" value="tRNA_synthase_B5-dom"/>
</dbReference>
<dbReference type="NCBIfam" id="TIGR00472">
    <property type="entry name" value="pheT_bact"/>
    <property type="match status" value="1"/>
</dbReference>
<dbReference type="NCBIfam" id="NF045760">
    <property type="entry name" value="YtpR"/>
    <property type="match status" value="1"/>
</dbReference>
<dbReference type="PANTHER" id="PTHR10947:SF0">
    <property type="entry name" value="PHENYLALANINE--TRNA LIGASE BETA SUBUNIT"/>
    <property type="match status" value="1"/>
</dbReference>
<dbReference type="PANTHER" id="PTHR10947">
    <property type="entry name" value="PHENYLALANYL-TRNA SYNTHETASE BETA CHAIN AND LEUCINE-RICH REPEAT-CONTAINING PROTEIN 47"/>
    <property type="match status" value="1"/>
</dbReference>
<dbReference type="Pfam" id="PF03483">
    <property type="entry name" value="B3_4"/>
    <property type="match status" value="1"/>
</dbReference>
<dbReference type="Pfam" id="PF03484">
    <property type="entry name" value="B5"/>
    <property type="match status" value="1"/>
</dbReference>
<dbReference type="Pfam" id="PF03147">
    <property type="entry name" value="FDX-ACB"/>
    <property type="match status" value="1"/>
</dbReference>
<dbReference type="Pfam" id="PF01588">
    <property type="entry name" value="tRNA_bind"/>
    <property type="match status" value="1"/>
</dbReference>
<dbReference type="Pfam" id="PF17759">
    <property type="entry name" value="tRNA_synthFbeta"/>
    <property type="match status" value="1"/>
</dbReference>
<dbReference type="SMART" id="SM00873">
    <property type="entry name" value="B3_4"/>
    <property type="match status" value="1"/>
</dbReference>
<dbReference type="SMART" id="SM00874">
    <property type="entry name" value="B5"/>
    <property type="match status" value="1"/>
</dbReference>
<dbReference type="SMART" id="SM00896">
    <property type="entry name" value="FDX-ACB"/>
    <property type="match status" value="1"/>
</dbReference>
<dbReference type="SUPFAM" id="SSF54991">
    <property type="entry name" value="Anticodon-binding domain of PheRS"/>
    <property type="match status" value="1"/>
</dbReference>
<dbReference type="SUPFAM" id="SSF55681">
    <property type="entry name" value="Class II aaRS and biotin synthetases"/>
    <property type="match status" value="1"/>
</dbReference>
<dbReference type="SUPFAM" id="SSF50249">
    <property type="entry name" value="Nucleic acid-binding proteins"/>
    <property type="match status" value="1"/>
</dbReference>
<dbReference type="SUPFAM" id="SSF56037">
    <property type="entry name" value="PheT/TilS domain"/>
    <property type="match status" value="1"/>
</dbReference>
<dbReference type="SUPFAM" id="SSF46955">
    <property type="entry name" value="Putative DNA-binding domain"/>
    <property type="match status" value="1"/>
</dbReference>
<dbReference type="PROSITE" id="PS51483">
    <property type="entry name" value="B5"/>
    <property type="match status" value="1"/>
</dbReference>
<dbReference type="PROSITE" id="PS51447">
    <property type="entry name" value="FDX_ACB"/>
    <property type="match status" value="1"/>
</dbReference>
<dbReference type="PROSITE" id="PS50886">
    <property type="entry name" value="TRBD"/>
    <property type="match status" value="1"/>
</dbReference>
<comment type="catalytic activity">
    <reaction evidence="1">
        <text>tRNA(Phe) + L-phenylalanine + ATP = L-phenylalanyl-tRNA(Phe) + AMP + diphosphate + H(+)</text>
        <dbReference type="Rhea" id="RHEA:19413"/>
        <dbReference type="Rhea" id="RHEA-COMP:9668"/>
        <dbReference type="Rhea" id="RHEA-COMP:9699"/>
        <dbReference type="ChEBI" id="CHEBI:15378"/>
        <dbReference type="ChEBI" id="CHEBI:30616"/>
        <dbReference type="ChEBI" id="CHEBI:33019"/>
        <dbReference type="ChEBI" id="CHEBI:58095"/>
        <dbReference type="ChEBI" id="CHEBI:78442"/>
        <dbReference type="ChEBI" id="CHEBI:78531"/>
        <dbReference type="ChEBI" id="CHEBI:456215"/>
        <dbReference type="EC" id="6.1.1.20"/>
    </reaction>
</comment>
<comment type="cofactor">
    <cofactor evidence="1">
        <name>Mg(2+)</name>
        <dbReference type="ChEBI" id="CHEBI:18420"/>
    </cofactor>
    <text evidence="1">Binds 2 magnesium ions per tetramer.</text>
</comment>
<comment type="subunit">
    <text evidence="1">Tetramer of two alpha and two beta subunits.</text>
</comment>
<comment type="subcellular location">
    <subcellularLocation>
        <location evidence="1">Cytoplasm</location>
    </subcellularLocation>
</comment>
<comment type="similarity">
    <text evidence="1">Belongs to the phenylalanyl-tRNA synthetase beta subunit family. Type 1 subfamily.</text>
</comment>
<accession>Q3KEX7</accession>
<sequence length="792" mass="86824">MKFSEQWLRGWVSPQVDRDALVARLSMAGLEVDSVTPAAGVFSGVVVGEVLSTEQHPDADKLRVCQVSNGAETFQVVCGAPNVRPGLKIPFAMIGAELPGDFKIKKAKLRGVESNGMLCSQAELQIGEGNDGLMELPADASVGEDFRVYLDLEDASIEVDLTPNRGDCLSLAGLAREVGALYDAPVTRPVVMAVPAAHDEVRSVEVLAPAACPRYLGRVIRNVDLSRPTPLWMVERLRRAEVRSIDAAVDITNYVMLELGQPLHAFDLAEINGGIRVRMAEEGEKLVLLDGQEVSLRSDTLVVADHTRALAIAGVMGGEHSGVSATTRDVFLESAFFDQIAVAGKARSYGLHTDASHRYERGVDWQLAREAMERATGLLLEITGGEAGPIIETVSEQHLPSIAPITLRAQRITQMLGMEMDSAEVERLLNALGLKVSADGAGQWRVEVPSHRFDISLEVDLIEELARLYGYNRLPVRYPQARLAPQAKAEARSDLPELRRLLVARGYQEAITYSFIDPKQFELFNPGVEPLLLANPISNDMAAMRSSLWPGLVKALQHNLNRQQDRVRLFESGLRFVGQLEGLKQEPMIAGVVCGSRLPEGWAQGRDTVDFFDVKADVEAVLGFAGALDQFTFAPGKHPALHPGQTARIEREGREVGFIGAIHPELSKSLGLDRPVFVFELVLAEVALGKMPKFHELSRFPEVRRDLALIAHKDVAASAVLDVIRENAGEWLTDLRLFDVYQGKGIDTDRKSLAVGLTWQHPSRTLNDDEVNSTTQNILTSLEQRLNATLRK</sequence>
<protein>
    <recommendedName>
        <fullName evidence="1">Phenylalanine--tRNA ligase beta subunit</fullName>
        <ecNumber evidence="1">6.1.1.20</ecNumber>
    </recommendedName>
    <alternativeName>
        <fullName evidence="1">Phenylalanyl-tRNA synthetase beta subunit</fullName>
        <shortName evidence="1">PheRS</shortName>
    </alternativeName>
</protein>
<reference key="1">
    <citation type="journal article" date="2009" name="Genome Biol.">
        <title>Genomic and genetic analyses of diversity and plant interactions of Pseudomonas fluorescens.</title>
        <authorList>
            <person name="Silby M.W."/>
            <person name="Cerdeno-Tarraga A.M."/>
            <person name="Vernikos G.S."/>
            <person name="Giddens S.R."/>
            <person name="Jackson R.W."/>
            <person name="Preston G.M."/>
            <person name="Zhang X.-X."/>
            <person name="Moon C.D."/>
            <person name="Gehrig S.M."/>
            <person name="Godfrey S.A.C."/>
            <person name="Knight C.G."/>
            <person name="Malone J.G."/>
            <person name="Robinson Z."/>
            <person name="Spiers A.J."/>
            <person name="Harris S."/>
            <person name="Challis G.L."/>
            <person name="Yaxley A.M."/>
            <person name="Harris D."/>
            <person name="Seeger K."/>
            <person name="Murphy L."/>
            <person name="Rutter S."/>
            <person name="Squares R."/>
            <person name="Quail M.A."/>
            <person name="Saunders E."/>
            <person name="Mavromatis K."/>
            <person name="Brettin T.S."/>
            <person name="Bentley S.D."/>
            <person name="Hothersall J."/>
            <person name="Stephens E."/>
            <person name="Thomas C.M."/>
            <person name="Parkhill J."/>
            <person name="Levy S.B."/>
            <person name="Rainey P.B."/>
            <person name="Thomson N.R."/>
        </authorList>
    </citation>
    <scope>NUCLEOTIDE SEQUENCE [LARGE SCALE GENOMIC DNA]</scope>
    <source>
        <strain>Pf0-1</strain>
    </source>
</reference>
<organism>
    <name type="scientific">Pseudomonas fluorescens (strain Pf0-1)</name>
    <dbReference type="NCBI Taxonomy" id="205922"/>
    <lineage>
        <taxon>Bacteria</taxon>
        <taxon>Pseudomonadati</taxon>
        <taxon>Pseudomonadota</taxon>
        <taxon>Gammaproteobacteria</taxon>
        <taxon>Pseudomonadales</taxon>
        <taxon>Pseudomonadaceae</taxon>
        <taxon>Pseudomonas</taxon>
    </lineage>
</organism>
<gene>
    <name evidence="1" type="primary">pheT</name>
    <name type="ordered locus">Pfl01_1936</name>
</gene>
<keyword id="KW-0030">Aminoacyl-tRNA synthetase</keyword>
<keyword id="KW-0067">ATP-binding</keyword>
<keyword id="KW-0963">Cytoplasm</keyword>
<keyword id="KW-0436">Ligase</keyword>
<keyword id="KW-0460">Magnesium</keyword>
<keyword id="KW-0479">Metal-binding</keyword>
<keyword id="KW-0547">Nucleotide-binding</keyword>
<keyword id="KW-0648">Protein biosynthesis</keyword>
<keyword id="KW-0694">RNA-binding</keyword>
<keyword id="KW-0820">tRNA-binding</keyword>
<proteinExistence type="inferred from homology"/>
<name>SYFB_PSEPF</name>